<reference key="1">
    <citation type="journal article" date="1998" name="Cell">
        <title>MIX-1: an essential component of the C. elegans mitotic machinery executes X chromosome dosage compensation.</title>
        <authorList>
            <person name="Lieb J.D."/>
            <person name="Albrecht M.R."/>
            <person name="Chuang P.-T."/>
            <person name="Meyer B.J."/>
        </authorList>
    </citation>
    <scope>NUCLEOTIDE SEQUENCE [MRNA]</scope>
    <scope>FUNCTION</scope>
    <scope>SUBCELLULAR LOCATION</scope>
    <scope>MUTAGENESIS OF GLY-35 AND GLU-64</scope>
</reference>
<reference key="2">
    <citation type="journal article" date="1998" name="Science">
        <title>Genome sequence of the nematode C. elegans: a platform for investigating biology.</title>
        <authorList>
            <consortium name="The C. elegans sequencing consortium"/>
        </authorList>
    </citation>
    <scope>NUCLEOTIDE SEQUENCE [LARGE SCALE GENOMIC DNA]</scope>
    <source>
        <strain>Bristol N2</strain>
    </source>
</reference>
<reference key="3">
    <citation type="journal article" date="2002" name="Genes Dev.">
        <title>C. elegans condensin promotes mitotic chromosome architecture, centromere organization, and sister chromatid segregation during mitosis and meiosis.</title>
        <authorList>
            <person name="Hagstrom K.A."/>
            <person name="Holmes V.F."/>
            <person name="Cozzarelli N.R."/>
            <person name="Meyer B.J."/>
        </authorList>
    </citation>
    <scope>FUNCTION</scope>
    <scope>INTERACTION WITH SMC-4 AND DPY-27</scope>
    <scope>SUBCELLULAR LOCATION</scope>
    <scope>DISRUPTION PHENOTYPE</scope>
</reference>
<reference key="4">
    <citation type="journal article" date="2004" name="J. Cell Biol.">
        <title>Condensin restructures chromosomes in preparation for meiotic divisions.</title>
        <authorList>
            <person name="Chan R.C."/>
            <person name="Severson A.F."/>
            <person name="Meyer B.J."/>
        </authorList>
    </citation>
    <scope>FUNCTION</scope>
    <scope>IDENTIFICATION IN A DOSAGE COMPENSATION COMPLEX AND IN A CONDENSIN II COMPLEX</scope>
    <scope>INTERACTION WITH DPY-27; SMC-4; DPY-28 AND HCP-6</scope>
    <scope>SUBCELLULAR LOCATION</scope>
    <scope>TISSUE SPECIFICITY</scope>
    <scope>MUTAGENESIS OF GLU-64</scope>
</reference>
<reference key="5">
    <citation type="journal article" date="2008" name="Genes Dev.">
        <title>Meiotic crossover number and distribution are regulated by a dosage compensation protein that resembles a condensin subunit.</title>
        <authorList>
            <person name="Tsai C.J."/>
            <person name="Mets D.G."/>
            <person name="Albrecht M.R."/>
            <person name="Nix P."/>
            <person name="Chan A."/>
            <person name="Meyer B.J."/>
        </authorList>
    </citation>
    <scope>FUNCTION</scope>
    <scope>IDENTIFICATION IN A DOSAGE COMPENSATION COMPLEX</scope>
    <scope>INTERACTION WITH DPY-26; DPY-27; DPY-28</scope>
    <scope>SUBCELLULAR LOCATION</scope>
</reference>
<reference key="6">
    <citation type="journal article" date="2009" name="Cell">
        <title>Condensins regulate meiotic DNA break distribution, thus crossover frequency, by controlling chromosome structure.</title>
        <authorList>
            <person name="Mets D.G."/>
            <person name="Meyer B.J."/>
        </authorList>
    </citation>
    <scope>FUNCTION</scope>
    <scope>IDENTIFICATION IN A DOSAGE COMPENSATION COMPLEX AND IN A CONDENSIN I COMPLEX</scope>
    <scope>INTERACTION WITH DPY-26 AND SMC-4</scope>
</reference>
<reference key="7">
    <citation type="journal article" date="2009" name="Curr. Biol.">
        <title>Three distinct condensin complexes control C. elegans chromosome dynamics.</title>
        <authorList>
            <person name="Csankovszki G."/>
            <person name="Collette K."/>
            <person name="Spahl K."/>
            <person name="Carey J."/>
            <person name="Snyder M."/>
            <person name="Petty E."/>
            <person name="Patel U."/>
            <person name="Tabuchi T."/>
            <person name="Liu H."/>
            <person name="McLeod I."/>
            <person name="Thompson J."/>
            <person name="Sarkeshik A."/>
            <person name="Sarkesik A."/>
            <person name="Yates J."/>
            <person name="Meyer B.J."/>
            <person name="Hagstrom K."/>
        </authorList>
    </citation>
    <scope>FUNCTION</scope>
    <scope>IDENTIFICATION IN A CONDENSIN I COMPLEX; IN A CONDENSIN II COMPLEX AND IN A DOSAGE COMPENSATION COMPLEX</scope>
    <scope>INTERACTION WITH DPY-27; SMC-4; KLE-2; DPY-26; CAPG-1 AND HCP-6</scope>
    <scope>SUBCELLULAR LOCATION</scope>
    <scope>DISRUPTION PHENOTYPE</scope>
    <scope>MUTAGENESIS OF GLY-35</scope>
</reference>
<reference key="8">
    <citation type="journal article" date="2013" name="Curr. Biol.">
        <title>Condensin and the spindle midzone prevent cytokinesis failure induced by chromatin bridges in C. elegans embryos.</title>
        <authorList>
            <person name="Bembenek J.N."/>
            <person name="Verbrugghe K.J."/>
            <person name="Khanikar J."/>
            <person name="Csankovszki G."/>
            <person name="Chan R.C."/>
        </authorList>
    </citation>
    <scope>FUNCTION</scope>
    <scope>DISRUPTION PHENOTYPE</scope>
</reference>
<reference key="9">
    <citation type="journal article" date="2017" name="PLoS Genet.">
        <title>An SMC-like protein binds and regulates Caenorhabditis elegans condensins.</title>
        <authorList>
            <person name="Chao L.F."/>
            <person name="Singh M."/>
            <person name="Thompson J."/>
            <person name="Yates J.R. III"/>
            <person name="Hagstrom K.A."/>
        </authorList>
    </citation>
    <scope>INTERACTION WITH SMCL-1; DPY-27 AND KLE-2</scope>
    <scope>IDENTIFICATION BY MASS SPECTROMETRY</scope>
</reference>
<name>MIX1_CAEEL</name>
<organism>
    <name type="scientific">Caenorhabditis elegans</name>
    <dbReference type="NCBI Taxonomy" id="6239"/>
    <lineage>
        <taxon>Eukaryota</taxon>
        <taxon>Metazoa</taxon>
        <taxon>Ecdysozoa</taxon>
        <taxon>Nematoda</taxon>
        <taxon>Chromadorea</taxon>
        <taxon>Rhabditida</taxon>
        <taxon>Rhabditina</taxon>
        <taxon>Rhabditomorpha</taxon>
        <taxon>Rhabditoidea</taxon>
        <taxon>Rhabditidae</taxon>
        <taxon>Peloderinae</taxon>
        <taxon>Caenorhabditis</taxon>
    </lineage>
</organism>
<evidence type="ECO:0000250" key="1"/>
<evidence type="ECO:0000250" key="2">
    <source>
        <dbReference type="UniProtKB" id="P50533"/>
    </source>
</evidence>
<evidence type="ECO:0000255" key="3"/>
<evidence type="ECO:0000255" key="4">
    <source>
        <dbReference type="PROSITE-ProRule" id="PRU00499"/>
    </source>
</evidence>
<evidence type="ECO:0000256" key="5">
    <source>
        <dbReference type="SAM" id="MobiDB-lite"/>
    </source>
</evidence>
<evidence type="ECO:0000269" key="6">
    <source>
    </source>
</evidence>
<evidence type="ECO:0000269" key="7">
    <source>
    </source>
</evidence>
<evidence type="ECO:0000269" key="8">
    <source>
    </source>
</evidence>
<evidence type="ECO:0000269" key="9">
    <source>
    </source>
</evidence>
<evidence type="ECO:0000269" key="10">
    <source>
    </source>
</evidence>
<evidence type="ECO:0000269" key="11">
    <source>
    </source>
</evidence>
<evidence type="ECO:0000269" key="12">
    <source>
    </source>
</evidence>
<evidence type="ECO:0000269" key="13">
    <source>
    </source>
</evidence>
<evidence type="ECO:0000305" key="14"/>
<proteinExistence type="evidence at protein level"/>
<dbReference type="EMBL" id="U96387">
    <property type="protein sequence ID" value="AAC47834.1"/>
    <property type="molecule type" value="mRNA"/>
</dbReference>
<dbReference type="EMBL" id="Z46935">
    <property type="protein sequence ID" value="CAA87054.1"/>
    <property type="molecule type" value="Genomic_DNA"/>
</dbReference>
<dbReference type="PIR" id="T23744">
    <property type="entry name" value="T23744"/>
</dbReference>
<dbReference type="PIR" id="T23981">
    <property type="entry name" value="T23981"/>
</dbReference>
<dbReference type="RefSeq" id="NP_496331.1">
    <property type="nucleotide sequence ID" value="NM_063930.8"/>
</dbReference>
<dbReference type="SMR" id="Q09591"/>
<dbReference type="BioGRID" id="39979">
    <property type="interactions" value="15"/>
</dbReference>
<dbReference type="ComplexPortal" id="CPX-1271">
    <property type="entry name" value="Condensin I complex"/>
</dbReference>
<dbReference type="ComplexPortal" id="CPX-1272">
    <property type="entry name" value="Condensin II complex"/>
</dbReference>
<dbReference type="ComplexPortal" id="CPX-1273">
    <property type="entry name" value="Condensin I-like dosage compensation complex"/>
</dbReference>
<dbReference type="FunCoup" id="Q09591">
    <property type="interactions" value="2985"/>
</dbReference>
<dbReference type="IntAct" id="Q09591">
    <property type="interactions" value="6"/>
</dbReference>
<dbReference type="STRING" id="6239.M106.1.1"/>
<dbReference type="iPTMnet" id="Q09591"/>
<dbReference type="PaxDb" id="6239-M106.1"/>
<dbReference type="EnsemblMetazoa" id="M106.1.1">
    <property type="protein sequence ID" value="M106.1.1"/>
    <property type="gene ID" value="WBGene00003367"/>
</dbReference>
<dbReference type="GeneID" id="174669"/>
<dbReference type="KEGG" id="cel:CELE_M106.1"/>
<dbReference type="UCSC" id="M106.1">
    <property type="organism name" value="c. elegans"/>
</dbReference>
<dbReference type="AGR" id="WB:WBGene00003367"/>
<dbReference type="CTD" id="174669"/>
<dbReference type="WormBase" id="M106.1">
    <property type="protein sequence ID" value="CE18083"/>
    <property type="gene ID" value="WBGene00003367"/>
    <property type="gene designation" value="mix-1"/>
</dbReference>
<dbReference type="eggNOG" id="KOG0933">
    <property type="taxonomic scope" value="Eukaryota"/>
</dbReference>
<dbReference type="GeneTree" id="ENSGT00550000074857"/>
<dbReference type="HOGENOM" id="CLU_001042_9_0_1"/>
<dbReference type="InParanoid" id="Q09591"/>
<dbReference type="OMA" id="THNKIAM"/>
<dbReference type="OrthoDB" id="10255539at2759"/>
<dbReference type="PhylomeDB" id="Q09591"/>
<dbReference type="Reactome" id="R-CEL-2299718">
    <property type="pathway name" value="Condensation of Prophase Chromosomes"/>
</dbReference>
<dbReference type="PRO" id="PR:Q09591"/>
<dbReference type="Proteomes" id="UP000001940">
    <property type="component" value="Chromosome II"/>
</dbReference>
<dbReference type="Bgee" id="WBGene00003367">
    <property type="expression patterns" value="Expressed in embryo and 4 other cell types or tissues"/>
</dbReference>
<dbReference type="GO" id="GO:0000785">
    <property type="term" value="C:chromatin"/>
    <property type="evidence" value="ECO:0000318"/>
    <property type="project" value="GO_Central"/>
</dbReference>
<dbReference type="GO" id="GO:0000775">
    <property type="term" value="C:chromosome, centromeric region"/>
    <property type="evidence" value="ECO:0000314"/>
    <property type="project" value="WormBase"/>
</dbReference>
<dbReference type="GO" id="GO:0000793">
    <property type="term" value="C:condensed chromosome"/>
    <property type="evidence" value="ECO:0000314"/>
    <property type="project" value="WormBase"/>
</dbReference>
<dbReference type="GO" id="GO:0000796">
    <property type="term" value="C:condensin complex"/>
    <property type="evidence" value="ECO:0000353"/>
    <property type="project" value="ComplexPortal"/>
</dbReference>
<dbReference type="GO" id="GO:0046536">
    <property type="term" value="C:dosage compensation complex"/>
    <property type="evidence" value="ECO:0000353"/>
    <property type="project" value="WormBase"/>
</dbReference>
<dbReference type="GO" id="GO:0000805">
    <property type="term" value="C:X chromosome"/>
    <property type="evidence" value="ECO:0000303"/>
    <property type="project" value="ComplexPortal"/>
</dbReference>
<dbReference type="GO" id="GO:0005524">
    <property type="term" value="F:ATP binding"/>
    <property type="evidence" value="ECO:0007669"/>
    <property type="project" value="UniProtKB-KW"/>
</dbReference>
<dbReference type="GO" id="GO:0016887">
    <property type="term" value="F:ATP hydrolysis activity"/>
    <property type="evidence" value="ECO:0007669"/>
    <property type="project" value="InterPro"/>
</dbReference>
<dbReference type="GO" id="GO:0003682">
    <property type="term" value="F:chromatin binding"/>
    <property type="evidence" value="ECO:0000318"/>
    <property type="project" value="GO_Central"/>
</dbReference>
<dbReference type="GO" id="GO:0051301">
    <property type="term" value="P:cell division"/>
    <property type="evidence" value="ECO:0007669"/>
    <property type="project" value="UniProtKB-KW"/>
</dbReference>
<dbReference type="GO" id="GO:0042464">
    <property type="term" value="P:dosage compensation by hypoactivation of X chromosome"/>
    <property type="evidence" value="ECO:0000315"/>
    <property type="project" value="WormBase"/>
</dbReference>
<dbReference type="GO" id="GO:0009792">
    <property type="term" value="P:embryo development ending in birth or egg hatching"/>
    <property type="evidence" value="ECO:0000315"/>
    <property type="project" value="WormBase"/>
</dbReference>
<dbReference type="GO" id="GO:0045132">
    <property type="term" value="P:meiotic chromosome segregation"/>
    <property type="evidence" value="ECO:0000303"/>
    <property type="project" value="ComplexPortal"/>
</dbReference>
<dbReference type="GO" id="GO:0007076">
    <property type="term" value="P:mitotic chromosome condensation"/>
    <property type="evidence" value="ECO:0000315"/>
    <property type="project" value="WormBase"/>
</dbReference>
<dbReference type="GO" id="GO:0000070">
    <property type="term" value="P:mitotic sister chromatid segregation"/>
    <property type="evidence" value="ECO:0000315"/>
    <property type="project" value="WormBase"/>
</dbReference>
<dbReference type="GO" id="GO:0010629">
    <property type="term" value="P:negative regulation of gene expression"/>
    <property type="evidence" value="ECO:0000303"/>
    <property type="project" value="ComplexPortal"/>
</dbReference>
<dbReference type="GO" id="GO:0110039">
    <property type="term" value="P:positive regulation of nematode male tail tip morphogenesis"/>
    <property type="evidence" value="ECO:0000315"/>
    <property type="project" value="UniProtKB"/>
</dbReference>
<dbReference type="CDD" id="cd03273">
    <property type="entry name" value="ABC_SMC2_euk"/>
    <property type="match status" value="1"/>
</dbReference>
<dbReference type="Gene3D" id="1.20.1060.20">
    <property type="match status" value="1"/>
</dbReference>
<dbReference type="Gene3D" id="3.30.70.1620">
    <property type="match status" value="1"/>
</dbReference>
<dbReference type="Gene3D" id="3.40.50.300">
    <property type="entry name" value="P-loop containing nucleotide triphosphate hydrolases"/>
    <property type="match status" value="2"/>
</dbReference>
<dbReference type="InterPro" id="IPR027417">
    <property type="entry name" value="P-loop_NTPase"/>
</dbReference>
<dbReference type="InterPro" id="IPR003395">
    <property type="entry name" value="RecF/RecN/SMC_N"/>
</dbReference>
<dbReference type="InterPro" id="IPR024704">
    <property type="entry name" value="SMC"/>
</dbReference>
<dbReference type="InterPro" id="IPR027120">
    <property type="entry name" value="Smc2_ABC"/>
</dbReference>
<dbReference type="InterPro" id="IPR010935">
    <property type="entry name" value="SMC_hinge"/>
</dbReference>
<dbReference type="InterPro" id="IPR036277">
    <property type="entry name" value="SMC_hinge_sf"/>
</dbReference>
<dbReference type="PANTHER" id="PTHR43977">
    <property type="entry name" value="STRUCTURAL MAINTENANCE OF CHROMOSOMES PROTEIN 3"/>
    <property type="match status" value="1"/>
</dbReference>
<dbReference type="Pfam" id="PF06470">
    <property type="entry name" value="SMC_hinge"/>
    <property type="match status" value="1"/>
</dbReference>
<dbReference type="Pfam" id="PF02463">
    <property type="entry name" value="SMC_N"/>
    <property type="match status" value="1"/>
</dbReference>
<dbReference type="PIRSF" id="PIRSF005719">
    <property type="entry name" value="SMC"/>
    <property type="match status" value="1"/>
</dbReference>
<dbReference type="SMART" id="SM00968">
    <property type="entry name" value="SMC_hinge"/>
    <property type="match status" value="1"/>
</dbReference>
<dbReference type="SUPFAM" id="SSF52540">
    <property type="entry name" value="P-loop containing nucleoside triphosphate hydrolases"/>
    <property type="match status" value="1"/>
</dbReference>
<dbReference type="SUPFAM" id="SSF75553">
    <property type="entry name" value="Smc hinge domain"/>
    <property type="match status" value="1"/>
</dbReference>
<feature type="chain" id="PRO_0000118999" description="Mitotic chromosome and X-chromosome-associated protein mix-1">
    <location>
        <begin position="1"/>
        <end position="1244"/>
    </location>
</feature>
<feature type="domain" description="SMC hinge">
    <location>
        <begin position="526"/>
        <end position="654"/>
    </location>
</feature>
<feature type="region of interest" description="Disordered" evidence="5">
    <location>
        <begin position="337"/>
        <end position="369"/>
    </location>
</feature>
<feature type="region of interest" description="Disordered" evidence="5">
    <location>
        <begin position="919"/>
        <end position="943"/>
    </location>
</feature>
<feature type="region of interest" description="Disordered" evidence="5">
    <location>
        <begin position="1216"/>
        <end position="1244"/>
    </location>
</feature>
<feature type="coiled-coil region" evidence="3">
    <location>
        <begin position="247"/>
        <end position="355"/>
    </location>
</feature>
<feature type="coiled-coil region" evidence="3">
    <location>
        <begin position="415"/>
        <end position="472"/>
    </location>
</feature>
<feature type="coiled-coil region" evidence="3">
    <location>
        <begin position="701"/>
        <end position="946"/>
    </location>
</feature>
<feature type="coiled-coil region" evidence="3">
    <location>
        <begin position="975"/>
        <end position="1037"/>
    </location>
</feature>
<feature type="compositionally biased region" description="Basic and acidic residues" evidence="5">
    <location>
        <begin position="337"/>
        <end position="355"/>
    </location>
</feature>
<feature type="compositionally biased region" description="Polar residues" evidence="5">
    <location>
        <begin position="356"/>
        <end position="365"/>
    </location>
</feature>
<feature type="compositionally biased region" description="Basic and acidic residues" evidence="5">
    <location>
        <begin position="919"/>
        <end position="932"/>
    </location>
</feature>
<feature type="compositionally biased region" description="Basic and acidic residues" evidence="5">
    <location>
        <begin position="1216"/>
        <end position="1232"/>
    </location>
</feature>
<feature type="binding site" evidence="4">
    <location>
        <begin position="32"/>
        <end position="39"/>
    </location>
    <ligand>
        <name>ATP</name>
        <dbReference type="ChEBI" id="CHEBI:30616"/>
    </ligand>
</feature>
<feature type="mutagenesis site" description="In mn29; induces defects in dosage compensation. Defects in mitotic chromosome segregation and in germline formation." evidence="9 13">
    <original>G</original>
    <variation>S</variation>
    <location>
        <position position="35"/>
    </location>
</feature>
<feature type="mutagenesis site" description="In b285; induces defects in dosage compensation. Defects in diakinesis bivalent formation. Blocks precocious homolog and sister chromatid separation in a RNAi-mediated rec-8 knockdown background." evidence="7 13">
    <original>E</original>
    <variation>K</variation>
    <location>
        <position position="64"/>
    </location>
</feature>
<protein>
    <recommendedName>
        <fullName>Mitotic chromosome and X-chromosome-associated protein mix-1</fullName>
    </recommendedName>
    <alternativeName>
        <fullName>Lethal protein 29</fullName>
    </alternativeName>
    <alternativeName>
        <fullName>Structural maintenance of chromosomes protein 2</fullName>
    </alternativeName>
</protein>
<sequence>MHIKSIHLDGFKSYQKHTDILDFSPTFNAITGYNGSGKSNILDSICFIMGINKLDNIRAKSMHELISHGGTKAIVQVRFDNTDKRCSPFGMEHLDEIVVQRIITAQATGKGCATSYTLNGHAATNGKMQDFFRGVGLNVNNPHFLIMQGRITTVLNMKPEEILGMVEEAAGTKMYDQKKKDAEKTMFLKDAKLKEVDRIFQSSIDPRMVKFREDRKNMVEVTRLKKLKENFSRKYEAFQYFQTCEAVKKSAKEIEDAKKGIEDLGEKFNQLDLDLKNKEDEKKKMEESRDDQHEEAALSAAHLSKQSIMLQKETVKNQLVETINKLKKEGEQINKSLSKDREVLDAKRKEHEDSKAANSKDIQSQSDDEALVTKYRNDLESLTRGTIANDKGEHVSIESEIQSCKSTASQMSSGITAAKKRGERLHNQIKHLEGEKATLSARSKSDIGSADNYQKEVDEINKQLQLLGFNIDADTEKREHAAKLHESITKLKDMDTRLLNSYKDGRYALNYQRPPLHIDKFDEKRDVFGYVAHLIKMKPGCEQFAVAADIALGGVLGNVVVSTQDIARILIDGKAFTSRKTMIPVSENARNASSYNTLPDVKLRRAKEIAEKYNDTVTKMIDLIEYPDFISNTILNAVGQILVVDSLDVAREIAYDEVAKTRMITRRGDDVRTNGIMTGGYNDPGNKPALIALEPMYARRPQIEAQQRELDALNRELQLTEASSQKCRDLNNQLATAMRKLAQVKTNINNSEFGIVVRDLKVHSEEYEKNQAEIEATVKTLKDVEDKIKTLESMKNKDKNSQEKRKKELTALLQKAEQTVAQNKNRGEKARREVMLLQATVEEMEKTIKKDEGIWEQKKKECDELEEKLPNAIAALKDAELEQKAAQAKLNDLKNNQRQISTRLGKIAKECDALIREKAKTKSKREEKEKELTSLQQSEASNRKEARSKLKKFEWLSDEEAHFNKKGGLYDFEGYTVSKGKDEIKELTDKIETLERSCCIQNVSNLDTCEAKVLDIKNKRERITEDFNMLKKTIATLDKKKVDELIRAHESVNKDFGQIFNCLLPDAHASLVPPEGKTVCEGLEVKVSFGGVVKDSLHELSGGQRSLVALSLILAMLKFKPAPLYILDEVDAALDLSHTANIGMMIKTHFHHNQFIIVSLKQGMFSNADVLFQTRFADGHSTCTRLNGGDIAVLCQDKVLQAQALELTDAGKAKKDAAAKKGAQKNDKEPPKKKPIVVDDDDFE</sequence>
<accession>Q09591</accession>
<keyword id="KW-0067">ATP-binding</keyword>
<keyword id="KW-0131">Cell cycle</keyword>
<keyword id="KW-0132">Cell division</keyword>
<keyword id="KW-0158">Chromosome</keyword>
<keyword id="KW-0175">Coiled coil</keyword>
<keyword id="KW-0226">DNA condensation</keyword>
<keyword id="KW-0469">Meiosis</keyword>
<keyword id="KW-0498">Mitosis</keyword>
<keyword id="KW-0547">Nucleotide-binding</keyword>
<keyword id="KW-0539">Nucleus</keyword>
<keyword id="KW-1185">Reference proteome</keyword>
<comment type="function">
    <text evidence="2 6 7 8 9 10 11 13">Essential protein required for both chromosome condensation and segregation and X-chromosome dosage compensation depending on its binding partners (PubMed:11914278, PubMed:18198337, PubMed:19119011, PubMed:19781752, PubMed:9458050). Central component of the condensin I complex, a complex required for conversion of interphase chromatin into mitotic-like condense chromosomes (PubMed:11914278, PubMed:18198337, PubMed:19119011). The condensin complex introduces positive supercoils into relaxed DNA in the presence of type I topoisomerases (PubMed:11914278). Converts nicked DNA into positive knotted forms in the presence of type II topoisomerases (By similarity). Central component of the condensin II complex, a complex that seems to play a role in prophase chromosome condensation and organization (PubMed:15557118, PubMed:19119011). Both the condensin complex I and II play a role in meiotic and mitotic chromosome segregation (PubMed:11914278, PubMed:15557118, PubMed:19119011). Plays a role in robust cytokinesis upon the presence of chromatin obstructions (PubMed:23684975). Also a member of the condensin I-like dosage compensation complex that associates specifically with hermaphrodite X chromosomes to reduce their gene transcription during interphase (PubMed:18198337, PubMed:19119011, PubMed:19781752, PubMed:9458050).</text>
</comment>
<comment type="subunit">
    <text evidence="6 7 8 9 10 12">Component of the condensin I complex, which contains the mix-1/SMC2 and smc-4/SMC4 heterodimer, and three non SMC subunits that probably regulate the complex: dpy-26, capg-1 and dpy-28 (PubMed:11914278, PubMed:18198337, PubMed:19119011, PubMed:19781752). Within the complex, interacts with smc-4, dpy-26, dpy-28 and capg-1 (PubMed:11914278, PubMed:15557118, PubMed:19119011, PubMed:19781752, PubMed:28301465). Interaction with smc-4 is required for mitotic chromosome localization (PubMed:11914278). Component of the condensin II complex, which contains the mix-1/SMC2 and smc-4/SMC4 heterodimer, and three non SMC subunits, capg-2, kle-2 and hcp-6 that probably regulate the complex (PubMed:15557118, PubMed:19119011). Within the complex, interacts with smc-4, capg-2, kle-2 and hcp-6 (PubMed:11914278, PubMed:15557118, PubMed:19119011, PubMed:28301465). Also a component of the condensin-like dosage compensation complex, which contains the mix-1/SMC2 and dpy-27/SMC4 heterodimer, and three non SMC subunits that probably regulate the complex: dpy-26, capg-1 and dpy-28 (PubMed:11914278, PubMed:15557118, PubMed:18198337, PubMed:19119011, PubMed:19781752). Within the complex, interacts with dpy-27, dpy-26, capg-1 and dpy-28 (PubMed:11914278, PubMed:15557118, PubMed:18198337, PubMed:19119011, PubMed:19781752, PubMed:28301465). Requires capg-1 for hermaphrodite X chromosome localization (PubMed:19119011). Interacts with smcl-1 (PubMed:28301465).</text>
</comment>
<comment type="interaction">
    <interactant intactId="EBI-1152136">
        <id>Q09591</id>
    </interactant>
    <interactant intactId="EBI-1152153">
        <id>P48996</id>
        <label>dpy-27</label>
    </interactant>
    <organismsDiffer>false</organismsDiffer>
    <experiments>5</experiments>
</comment>
<comment type="interaction">
    <interactant intactId="EBI-1152136">
        <id>Q09591</id>
    </interactant>
    <interactant intactId="EBI-1152127">
        <id>Q20060</id>
        <label>smc-4</label>
    </interactant>
    <organismsDiffer>false</organismsDiffer>
    <experiments>6</experiments>
</comment>
<comment type="subcellular location">
    <subcellularLocation>
        <location evidence="6 7 8 9 13">Nucleus</location>
    </subcellularLocation>
    <subcellularLocation>
        <location evidence="6 7 8 9 13">Chromosome</location>
    </subcellularLocation>
    <text evidence="6 7 8 9 13">During mitosis and meiosis, localizes to condensed chromosomes in both sexes (PubMed:11914278, PubMed:15557118, PubMed:19119011). During meiotic prophase, surrounds the chromosomes, localizes between homologs during meiotic metaphase I, and localizes between sister chromatids during metaphase II (PubMed:11914278). During mitotic metaphase, localizes at the poleward face and to the core of the condensed chromosomes (PubMed:15557118, PubMed:18198337, PubMed:19119011). Requires hcp-6 for the localization to meiotic chromosomes (PubMed:15557118). After the 40-cell stage when dosage compensation is initiated, specifically localizes to the hermaphrodite X chromosomes in interphase (PubMed:11914278, PubMed:9458050).</text>
</comment>
<comment type="tissue specificity">
    <text evidence="7">Expressed in embryos and in adult somatic and germline tissues (at protein level).</text>
</comment>
<comment type="domain">
    <text evidence="1">The flexible SMC hinge domain, which separates the large intramolecular coiled coil regions, allows the heterodimerization with SMC4, forming a V-shaped heterodimer.</text>
</comment>
<comment type="disruption phenotype">
    <text evidence="6 9 11">RNAi-mediated knockdown disrupts mitotic prophase chromosome condensation and chromosome segregation in anaphase leading to aneuploidy (PubMed:11914278, PubMed:19119011). Results in cleavage furrow regression and failed cytokinesis during the second embryonic division (PubMed:23684975).</text>
</comment>
<comment type="similarity">
    <text evidence="14">Belongs to the SMC family. SMC2 subfamily.</text>
</comment>
<gene>
    <name type="primary">mix-1</name>
    <name type="synonym">let-29</name>
    <name type="synonym">smc-2</name>
    <name type="ORF">M106.1</name>
</gene>